<protein>
    <recommendedName>
        <fullName evidence="1">Cytochrome c biogenesis ATP-binding export protein CcmA 1</fullName>
        <ecNumber evidence="1">7.6.2.5</ecNumber>
    </recommendedName>
    <alternativeName>
        <fullName evidence="1">Heme exporter protein A 1</fullName>
    </alternativeName>
</protein>
<comment type="function">
    <text evidence="1">Part of the ABC transporter complex CcmAB involved in the biogenesis of c-type cytochromes; once thought to export heme, this seems not to be the case, but its exact role is uncertain. Responsible for energy coupling to the transport system.</text>
</comment>
<comment type="catalytic activity">
    <reaction evidence="1">
        <text>heme b(in) + ATP + H2O = heme b(out) + ADP + phosphate + H(+)</text>
        <dbReference type="Rhea" id="RHEA:19261"/>
        <dbReference type="ChEBI" id="CHEBI:15377"/>
        <dbReference type="ChEBI" id="CHEBI:15378"/>
        <dbReference type="ChEBI" id="CHEBI:30616"/>
        <dbReference type="ChEBI" id="CHEBI:43474"/>
        <dbReference type="ChEBI" id="CHEBI:60344"/>
        <dbReference type="ChEBI" id="CHEBI:456216"/>
        <dbReference type="EC" id="7.6.2.5"/>
    </reaction>
</comment>
<comment type="subunit">
    <text evidence="1">The complex is composed of two ATP-binding proteins (CcmA) and two transmembrane proteins (CcmB).</text>
</comment>
<comment type="subcellular location">
    <subcellularLocation>
        <location evidence="1">Cell inner membrane</location>
        <topology evidence="1">Peripheral membrane protein</topology>
    </subcellularLocation>
</comment>
<comment type="similarity">
    <text evidence="1">Belongs to the ABC transporter superfamily. CcmA exporter (TC 3.A.1.107) family.</text>
</comment>
<accession>Q1LKR4</accession>
<proteinExistence type="inferred from homology"/>
<feature type="chain" id="PRO_0000271944" description="Cytochrome c biogenesis ATP-binding export protein CcmA 1">
    <location>
        <begin position="1"/>
        <end position="207"/>
    </location>
</feature>
<feature type="domain" description="ABC transporter" evidence="1">
    <location>
        <begin position="6"/>
        <end position="207"/>
    </location>
</feature>
<feature type="binding site" evidence="1">
    <location>
        <begin position="38"/>
        <end position="45"/>
    </location>
    <ligand>
        <name>ATP</name>
        <dbReference type="ChEBI" id="CHEBI:30616"/>
    </ligand>
</feature>
<dbReference type="EC" id="7.6.2.5" evidence="1"/>
<dbReference type="EMBL" id="CP000352">
    <property type="protein sequence ID" value="ABF09262.1"/>
    <property type="molecule type" value="Genomic_DNA"/>
</dbReference>
<dbReference type="SMR" id="Q1LKR4"/>
<dbReference type="STRING" id="266264.Rmet_2385"/>
<dbReference type="KEGG" id="rme:Rmet_2385"/>
<dbReference type="eggNOG" id="COG4133">
    <property type="taxonomic scope" value="Bacteria"/>
</dbReference>
<dbReference type="HOGENOM" id="CLU_000604_1_2_4"/>
<dbReference type="Proteomes" id="UP000002429">
    <property type="component" value="Chromosome"/>
</dbReference>
<dbReference type="GO" id="GO:0005886">
    <property type="term" value="C:plasma membrane"/>
    <property type="evidence" value="ECO:0007669"/>
    <property type="project" value="UniProtKB-SubCell"/>
</dbReference>
<dbReference type="GO" id="GO:0015439">
    <property type="term" value="F:ABC-type heme transporter activity"/>
    <property type="evidence" value="ECO:0007669"/>
    <property type="project" value="UniProtKB-EC"/>
</dbReference>
<dbReference type="GO" id="GO:0005524">
    <property type="term" value="F:ATP binding"/>
    <property type="evidence" value="ECO:0007669"/>
    <property type="project" value="UniProtKB-KW"/>
</dbReference>
<dbReference type="GO" id="GO:0016887">
    <property type="term" value="F:ATP hydrolysis activity"/>
    <property type="evidence" value="ECO:0007669"/>
    <property type="project" value="InterPro"/>
</dbReference>
<dbReference type="GO" id="GO:0017004">
    <property type="term" value="P:cytochrome complex assembly"/>
    <property type="evidence" value="ECO:0007669"/>
    <property type="project" value="UniProtKB-KW"/>
</dbReference>
<dbReference type="Gene3D" id="3.40.50.300">
    <property type="entry name" value="P-loop containing nucleotide triphosphate hydrolases"/>
    <property type="match status" value="1"/>
</dbReference>
<dbReference type="InterPro" id="IPR003593">
    <property type="entry name" value="AAA+_ATPase"/>
</dbReference>
<dbReference type="InterPro" id="IPR003439">
    <property type="entry name" value="ABC_transporter-like_ATP-bd"/>
</dbReference>
<dbReference type="InterPro" id="IPR017871">
    <property type="entry name" value="ABC_transporter-like_CS"/>
</dbReference>
<dbReference type="InterPro" id="IPR005895">
    <property type="entry name" value="ABC_transptr_haem_export_CcmA"/>
</dbReference>
<dbReference type="InterPro" id="IPR027417">
    <property type="entry name" value="P-loop_NTPase"/>
</dbReference>
<dbReference type="NCBIfam" id="TIGR01189">
    <property type="entry name" value="ccmA"/>
    <property type="match status" value="1"/>
</dbReference>
<dbReference type="NCBIfam" id="NF010061">
    <property type="entry name" value="PRK13538.1"/>
    <property type="match status" value="1"/>
</dbReference>
<dbReference type="PANTHER" id="PTHR43499">
    <property type="entry name" value="ABC TRANSPORTER I FAMILY MEMBER 1"/>
    <property type="match status" value="1"/>
</dbReference>
<dbReference type="PANTHER" id="PTHR43499:SF1">
    <property type="entry name" value="ABC TRANSPORTER I FAMILY MEMBER 1"/>
    <property type="match status" value="1"/>
</dbReference>
<dbReference type="Pfam" id="PF00005">
    <property type="entry name" value="ABC_tran"/>
    <property type="match status" value="1"/>
</dbReference>
<dbReference type="SMART" id="SM00382">
    <property type="entry name" value="AAA"/>
    <property type="match status" value="1"/>
</dbReference>
<dbReference type="SUPFAM" id="SSF52540">
    <property type="entry name" value="P-loop containing nucleoside triphosphate hydrolases"/>
    <property type="match status" value="1"/>
</dbReference>
<dbReference type="PROSITE" id="PS00211">
    <property type="entry name" value="ABC_TRANSPORTER_1"/>
    <property type="match status" value="1"/>
</dbReference>
<dbReference type="PROSITE" id="PS50893">
    <property type="entry name" value="ABC_TRANSPORTER_2"/>
    <property type="match status" value="1"/>
</dbReference>
<dbReference type="PROSITE" id="PS51243">
    <property type="entry name" value="CCMA"/>
    <property type="match status" value="1"/>
</dbReference>
<sequence>MTRPMLEALDLAGVRGERRLFDHLTFRIVPGECLSVHGENGSGKTTLLRTLAGFATPAAGRVLWKGKPLRNQWSEYQRELVYNGHGIGLKEDLNALDNLLAAAAIAGEPVTTECVESALDEVGLAEHRHLPFRMLSQGQKRRASLARLLLYRRKLWILDEPSTALDQFGARWLGELIHRHQSRGGMVVLTSHQELALKTSQTVRMGA</sequence>
<organism>
    <name type="scientific">Cupriavidus metallidurans (strain ATCC 43123 / DSM 2839 / NBRC 102507 / CH34)</name>
    <name type="common">Ralstonia metallidurans</name>
    <dbReference type="NCBI Taxonomy" id="266264"/>
    <lineage>
        <taxon>Bacteria</taxon>
        <taxon>Pseudomonadati</taxon>
        <taxon>Pseudomonadota</taxon>
        <taxon>Betaproteobacteria</taxon>
        <taxon>Burkholderiales</taxon>
        <taxon>Burkholderiaceae</taxon>
        <taxon>Cupriavidus</taxon>
    </lineage>
</organism>
<gene>
    <name evidence="1" type="primary">ccmA1</name>
    <name type="ordered locus">Rmet_2385</name>
</gene>
<keyword id="KW-0067">ATP-binding</keyword>
<keyword id="KW-0997">Cell inner membrane</keyword>
<keyword id="KW-1003">Cell membrane</keyword>
<keyword id="KW-0201">Cytochrome c-type biogenesis</keyword>
<keyword id="KW-0472">Membrane</keyword>
<keyword id="KW-0547">Nucleotide-binding</keyword>
<keyword id="KW-1185">Reference proteome</keyword>
<keyword id="KW-1278">Translocase</keyword>
<keyword id="KW-0813">Transport</keyword>
<evidence type="ECO:0000255" key="1">
    <source>
        <dbReference type="HAMAP-Rule" id="MF_01707"/>
    </source>
</evidence>
<reference key="1">
    <citation type="journal article" date="2010" name="PLoS ONE">
        <title>The complete genome sequence of Cupriavidus metallidurans strain CH34, a master survivalist in harsh and anthropogenic environments.</title>
        <authorList>
            <person name="Janssen P.J."/>
            <person name="Van Houdt R."/>
            <person name="Moors H."/>
            <person name="Monsieurs P."/>
            <person name="Morin N."/>
            <person name="Michaux A."/>
            <person name="Benotmane M.A."/>
            <person name="Leys N."/>
            <person name="Vallaeys T."/>
            <person name="Lapidus A."/>
            <person name="Monchy S."/>
            <person name="Medigue C."/>
            <person name="Taghavi S."/>
            <person name="McCorkle S."/>
            <person name="Dunn J."/>
            <person name="van der Lelie D."/>
            <person name="Mergeay M."/>
        </authorList>
    </citation>
    <scope>NUCLEOTIDE SEQUENCE [LARGE SCALE GENOMIC DNA]</scope>
    <source>
        <strain>ATCC 43123 / DSM 2839 / NBRC 102507 / CH34</strain>
    </source>
</reference>
<name>CCMA1_CUPMC</name>